<reference key="1">
    <citation type="submission" date="2006-05" db="EMBL/GenBank/DDBJ databases">
        <authorList>
            <consortium name="Genoscope"/>
        </authorList>
    </citation>
    <scope>NUCLEOTIDE SEQUENCE [LARGE SCALE GENOMIC DNA]</scope>
    <source>
        <strain>RCC307</strain>
    </source>
</reference>
<keyword id="KW-0066">ATP synthesis</keyword>
<keyword id="KW-0067">ATP-binding</keyword>
<keyword id="KW-0139">CF(1)</keyword>
<keyword id="KW-0375">Hydrogen ion transport</keyword>
<keyword id="KW-0406">Ion transport</keyword>
<keyword id="KW-0472">Membrane</keyword>
<keyword id="KW-0547">Nucleotide-binding</keyword>
<keyword id="KW-1185">Reference proteome</keyword>
<keyword id="KW-0793">Thylakoid</keyword>
<keyword id="KW-1278">Translocase</keyword>
<keyword id="KW-0813">Transport</keyword>
<name>ATPB_SYNR3</name>
<protein>
    <recommendedName>
        <fullName evidence="1">ATP synthase subunit beta</fullName>
        <ecNumber evidence="1">7.1.2.2</ecNumber>
    </recommendedName>
    <alternativeName>
        <fullName evidence="1">ATP synthase F1 sector subunit beta</fullName>
    </alternativeName>
    <alternativeName>
        <fullName evidence="1">F-ATPase subunit beta</fullName>
    </alternativeName>
</protein>
<evidence type="ECO:0000255" key="1">
    <source>
        <dbReference type="HAMAP-Rule" id="MF_01347"/>
    </source>
</evidence>
<proteinExistence type="inferred from homology"/>
<dbReference type="EC" id="7.1.2.2" evidence="1"/>
<dbReference type="EMBL" id="CT978603">
    <property type="protein sequence ID" value="CAK28764.1"/>
    <property type="molecule type" value="Genomic_DNA"/>
</dbReference>
<dbReference type="SMR" id="A5GV55"/>
<dbReference type="STRING" id="316278.SynRCC307_1861"/>
<dbReference type="KEGG" id="syr:SynRCC307_1861"/>
<dbReference type="eggNOG" id="COG0055">
    <property type="taxonomic scope" value="Bacteria"/>
</dbReference>
<dbReference type="HOGENOM" id="CLU_022398_0_2_3"/>
<dbReference type="OrthoDB" id="9801639at2"/>
<dbReference type="Proteomes" id="UP000001115">
    <property type="component" value="Chromosome"/>
</dbReference>
<dbReference type="GO" id="GO:0031676">
    <property type="term" value="C:plasma membrane-derived thylakoid membrane"/>
    <property type="evidence" value="ECO:0007669"/>
    <property type="project" value="UniProtKB-SubCell"/>
</dbReference>
<dbReference type="GO" id="GO:0045259">
    <property type="term" value="C:proton-transporting ATP synthase complex"/>
    <property type="evidence" value="ECO:0007669"/>
    <property type="project" value="UniProtKB-KW"/>
</dbReference>
<dbReference type="GO" id="GO:0005524">
    <property type="term" value="F:ATP binding"/>
    <property type="evidence" value="ECO:0007669"/>
    <property type="project" value="UniProtKB-UniRule"/>
</dbReference>
<dbReference type="GO" id="GO:0016887">
    <property type="term" value="F:ATP hydrolysis activity"/>
    <property type="evidence" value="ECO:0007669"/>
    <property type="project" value="InterPro"/>
</dbReference>
<dbReference type="GO" id="GO:0046933">
    <property type="term" value="F:proton-transporting ATP synthase activity, rotational mechanism"/>
    <property type="evidence" value="ECO:0007669"/>
    <property type="project" value="UniProtKB-UniRule"/>
</dbReference>
<dbReference type="CDD" id="cd18110">
    <property type="entry name" value="ATP-synt_F1_beta_C"/>
    <property type="match status" value="1"/>
</dbReference>
<dbReference type="CDD" id="cd18115">
    <property type="entry name" value="ATP-synt_F1_beta_N"/>
    <property type="match status" value="1"/>
</dbReference>
<dbReference type="CDD" id="cd01133">
    <property type="entry name" value="F1-ATPase_beta_CD"/>
    <property type="match status" value="1"/>
</dbReference>
<dbReference type="FunFam" id="1.10.1140.10:FF:000001">
    <property type="entry name" value="ATP synthase subunit beta"/>
    <property type="match status" value="1"/>
</dbReference>
<dbReference type="FunFam" id="3.40.50.300:FF:000026">
    <property type="entry name" value="ATP synthase subunit beta"/>
    <property type="match status" value="1"/>
</dbReference>
<dbReference type="FunFam" id="2.40.10.170:FF:000002">
    <property type="entry name" value="ATP synthase subunit beta, chloroplastic"/>
    <property type="match status" value="1"/>
</dbReference>
<dbReference type="Gene3D" id="2.40.10.170">
    <property type="match status" value="1"/>
</dbReference>
<dbReference type="Gene3D" id="1.10.1140.10">
    <property type="entry name" value="Bovine Mitochondrial F1-atpase, Atp Synthase Beta Chain, Chain D, domain 3"/>
    <property type="match status" value="1"/>
</dbReference>
<dbReference type="Gene3D" id="3.40.50.300">
    <property type="entry name" value="P-loop containing nucleotide triphosphate hydrolases"/>
    <property type="match status" value="1"/>
</dbReference>
<dbReference type="HAMAP" id="MF_01347">
    <property type="entry name" value="ATP_synth_beta_bact"/>
    <property type="match status" value="1"/>
</dbReference>
<dbReference type="InterPro" id="IPR003593">
    <property type="entry name" value="AAA+_ATPase"/>
</dbReference>
<dbReference type="InterPro" id="IPR055190">
    <property type="entry name" value="ATP-synt_VA_C"/>
</dbReference>
<dbReference type="InterPro" id="IPR005722">
    <property type="entry name" value="ATP_synth_F1_bsu"/>
</dbReference>
<dbReference type="InterPro" id="IPR020003">
    <property type="entry name" value="ATPase_a/bsu_AS"/>
</dbReference>
<dbReference type="InterPro" id="IPR050053">
    <property type="entry name" value="ATPase_alpha/beta_chains"/>
</dbReference>
<dbReference type="InterPro" id="IPR004100">
    <property type="entry name" value="ATPase_F1/V1/A1_a/bsu_N"/>
</dbReference>
<dbReference type="InterPro" id="IPR036121">
    <property type="entry name" value="ATPase_F1/V1/A1_a/bsu_N_sf"/>
</dbReference>
<dbReference type="InterPro" id="IPR000194">
    <property type="entry name" value="ATPase_F1/V1/A1_a/bsu_nucl-bd"/>
</dbReference>
<dbReference type="InterPro" id="IPR024034">
    <property type="entry name" value="ATPase_F1/V1_b/a_C"/>
</dbReference>
<dbReference type="InterPro" id="IPR027417">
    <property type="entry name" value="P-loop_NTPase"/>
</dbReference>
<dbReference type="NCBIfam" id="TIGR01039">
    <property type="entry name" value="atpD"/>
    <property type="match status" value="1"/>
</dbReference>
<dbReference type="PANTHER" id="PTHR15184">
    <property type="entry name" value="ATP SYNTHASE"/>
    <property type="match status" value="1"/>
</dbReference>
<dbReference type="PANTHER" id="PTHR15184:SF71">
    <property type="entry name" value="ATP SYNTHASE SUBUNIT BETA, MITOCHONDRIAL"/>
    <property type="match status" value="1"/>
</dbReference>
<dbReference type="Pfam" id="PF00006">
    <property type="entry name" value="ATP-synt_ab"/>
    <property type="match status" value="1"/>
</dbReference>
<dbReference type="Pfam" id="PF02874">
    <property type="entry name" value="ATP-synt_ab_N"/>
    <property type="match status" value="1"/>
</dbReference>
<dbReference type="Pfam" id="PF22919">
    <property type="entry name" value="ATP-synt_VA_C"/>
    <property type="match status" value="1"/>
</dbReference>
<dbReference type="SMART" id="SM00382">
    <property type="entry name" value="AAA"/>
    <property type="match status" value="1"/>
</dbReference>
<dbReference type="SUPFAM" id="SSF47917">
    <property type="entry name" value="C-terminal domain of alpha and beta subunits of F1 ATP synthase"/>
    <property type="match status" value="1"/>
</dbReference>
<dbReference type="SUPFAM" id="SSF50615">
    <property type="entry name" value="N-terminal domain of alpha and beta subunits of F1 ATP synthase"/>
    <property type="match status" value="1"/>
</dbReference>
<dbReference type="SUPFAM" id="SSF52540">
    <property type="entry name" value="P-loop containing nucleoside triphosphate hydrolases"/>
    <property type="match status" value="1"/>
</dbReference>
<dbReference type="PROSITE" id="PS00152">
    <property type="entry name" value="ATPASE_ALPHA_BETA"/>
    <property type="match status" value="1"/>
</dbReference>
<accession>A5GV55</accession>
<comment type="function">
    <text evidence="1">Produces ATP from ADP in the presence of a proton gradient across the membrane. The catalytic sites are hosted primarily by the beta subunits.</text>
</comment>
<comment type="catalytic activity">
    <reaction evidence="1">
        <text>ATP + H2O + 4 H(+)(in) = ADP + phosphate + 5 H(+)(out)</text>
        <dbReference type="Rhea" id="RHEA:57720"/>
        <dbReference type="ChEBI" id="CHEBI:15377"/>
        <dbReference type="ChEBI" id="CHEBI:15378"/>
        <dbReference type="ChEBI" id="CHEBI:30616"/>
        <dbReference type="ChEBI" id="CHEBI:43474"/>
        <dbReference type="ChEBI" id="CHEBI:456216"/>
        <dbReference type="EC" id="7.1.2.2"/>
    </reaction>
</comment>
<comment type="subunit">
    <text evidence="1">F-type ATPases have 2 components, CF(1) - the catalytic core - and CF(0) - the membrane proton channel. CF(1) has five subunits: alpha(3), beta(3), gamma(1), delta(1), epsilon(1). CF(0) has four main subunits: a(1), b(1), b'(1) and c(9-12).</text>
</comment>
<comment type="subcellular location">
    <subcellularLocation>
        <location evidence="1">Cellular thylakoid membrane</location>
        <topology evidence="1">Peripheral membrane protein</topology>
    </subcellularLocation>
</comment>
<comment type="similarity">
    <text evidence="1">Belongs to the ATPase alpha/beta chains family.</text>
</comment>
<feature type="chain" id="PRO_0000339596" description="ATP synthase subunit beta">
    <location>
        <begin position="1"/>
        <end position="488"/>
    </location>
</feature>
<feature type="binding site" evidence="1">
    <location>
        <begin position="164"/>
        <end position="171"/>
    </location>
    <ligand>
        <name>ATP</name>
        <dbReference type="ChEBI" id="CHEBI:30616"/>
    </ligand>
</feature>
<gene>
    <name evidence="1" type="primary">atpD</name>
    <name evidence="1" type="synonym">atpB</name>
    <name type="ordered locus">SynRCC307_1861</name>
</gene>
<sequence length="488" mass="52224">MAAAAKATSGTKGVVRQVIGPVLDVEFPAGKLPRIYNALRIEGKNTAGQNIALTAEVQQLLGDHRIRAVAMSGTDGLVRGMEAVDTGAPISVPVGEGTLGRIMNVLGEPVDEQGPVKTDATAPIHRSAPKLTDLETKPKVFETGIKVIDLLAPYRQGGKVGLFGGAGMGKTVLIQELINNIAKEHGGVSVFGGVGERTREGNDLYEEFKDSGVINADDLSKSKVALCYGQMNEPPGARMRVGLSALTMAEHFRDVNKQDVLLFVDNIFRFVQAGSEVSALLGRMPSAVGYQPTLGTDVGELQERITSTLEGSITSIQAVYVPADDLTDPAPATTFAHLDATTVLSRGLASKGIYPAVDPLDSTSTMLQPAVVGDEHYKTARAVQSTLQRYKELQDIIAILGLDELSEDDRLTVDRARKVEKFLSQPFFVAEIFTGMPGQYVKLDETIKGFQMILSGELDDLPEAAFYLVGNIDQVKAKAEKIRSEAKG</sequence>
<organism>
    <name type="scientific">Synechococcus sp. (strain RCC307)</name>
    <dbReference type="NCBI Taxonomy" id="316278"/>
    <lineage>
        <taxon>Bacteria</taxon>
        <taxon>Bacillati</taxon>
        <taxon>Cyanobacteriota</taxon>
        <taxon>Cyanophyceae</taxon>
        <taxon>Synechococcales</taxon>
        <taxon>Synechococcaceae</taxon>
        <taxon>Synechococcus</taxon>
    </lineage>
</organism>